<organism>
    <name type="scientific">Loxosceles hirsuta</name>
    <name type="common">Recluse spider</name>
    <dbReference type="NCBI Taxonomy" id="571525"/>
    <lineage>
        <taxon>Eukaryota</taxon>
        <taxon>Metazoa</taxon>
        <taxon>Ecdysozoa</taxon>
        <taxon>Arthropoda</taxon>
        <taxon>Chelicerata</taxon>
        <taxon>Arachnida</taxon>
        <taxon>Araneae</taxon>
        <taxon>Araneomorphae</taxon>
        <taxon>Haplogynae</taxon>
        <taxon>Scytodoidea</taxon>
        <taxon>Sicariidae</taxon>
        <taxon>Loxosceles</taxon>
    </lineage>
</organism>
<keyword id="KW-0204">Cytolysis</keyword>
<keyword id="KW-1061">Dermonecrotic toxin</keyword>
<keyword id="KW-1015">Disulfide bond</keyword>
<keyword id="KW-0354">Hemolysis</keyword>
<keyword id="KW-0442">Lipid degradation</keyword>
<keyword id="KW-0443">Lipid metabolism</keyword>
<keyword id="KW-0456">Lyase</keyword>
<keyword id="KW-0460">Magnesium</keyword>
<keyword id="KW-0479">Metal-binding</keyword>
<keyword id="KW-0964">Secreted</keyword>
<keyword id="KW-0800">Toxin</keyword>
<feature type="chain" id="PRO_0000392833" description="Dermonecrotic toxin LhSicTox-alphaIV1ii">
    <location>
        <begin position="1" status="less than"/>
        <end position="278"/>
    </location>
</feature>
<feature type="active site" evidence="5">
    <location>
        <position position="5"/>
    </location>
</feature>
<feature type="active site" description="Nucleophile" evidence="5">
    <location>
        <position position="41"/>
    </location>
</feature>
<feature type="binding site" evidence="5">
    <location>
        <position position="25"/>
    </location>
    <ligand>
        <name>Mg(2+)</name>
        <dbReference type="ChEBI" id="CHEBI:18420"/>
    </ligand>
</feature>
<feature type="binding site" evidence="5">
    <location>
        <position position="27"/>
    </location>
    <ligand>
        <name>Mg(2+)</name>
        <dbReference type="ChEBI" id="CHEBI:18420"/>
    </ligand>
</feature>
<feature type="binding site" evidence="5">
    <location>
        <position position="85"/>
    </location>
    <ligand>
        <name>Mg(2+)</name>
        <dbReference type="ChEBI" id="CHEBI:18420"/>
    </ligand>
</feature>
<feature type="disulfide bond" evidence="3">
    <location>
        <begin position="45"/>
        <end position="51"/>
    </location>
</feature>
<feature type="disulfide bond" evidence="3">
    <location>
        <begin position="47"/>
        <end position="192"/>
    </location>
</feature>
<feature type="non-terminal residue">
    <location>
        <position position="1"/>
    </location>
</feature>
<comment type="function">
    <text evidence="1 3">Dermonecrotic toxins cleave the phosphodiester linkage between the phosphate and headgroup of certain phospholipids (sphingolipid and lysolipid substrates), forming an alcohol (often choline) and a cyclic phosphate (By similarity). This toxin acts on sphingomyelin (SM) (By similarity). It may also act on ceramide phosphoethanolamine (CPE), lysophosphatidylcholine (LPC) and lysophosphatidylethanolamine (LPE), but not on lysophosphatidylserine (LPS), and lysophosphatidylglycerol (LPG) (By similarity). It acts by transphosphatidylation, releasing exclusively cyclic phosphate products as second products (By similarity). Induces dermonecrosis, hemolysis, increased vascular permeability, edema, inflammatory response, and platelet aggregation (By similarity).</text>
</comment>
<comment type="catalytic activity">
    <reaction evidence="1">
        <text>an N-(acyl)-sphingosylphosphocholine = an N-(acyl)-sphingosyl-1,3-cyclic phosphate + choline</text>
        <dbReference type="Rhea" id="RHEA:60652"/>
        <dbReference type="ChEBI" id="CHEBI:15354"/>
        <dbReference type="ChEBI" id="CHEBI:64583"/>
        <dbReference type="ChEBI" id="CHEBI:143892"/>
    </reaction>
</comment>
<comment type="catalytic activity">
    <reaction evidence="1">
        <text>an N-(acyl)-sphingosylphosphoethanolamine = an N-(acyl)-sphingosyl-1,3-cyclic phosphate + ethanolamine</text>
        <dbReference type="Rhea" id="RHEA:60648"/>
        <dbReference type="ChEBI" id="CHEBI:57603"/>
        <dbReference type="ChEBI" id="CHEBI:143891"/>
        <dbReference type="ChEBI" id="CHEBI:143892"/>
    </reaction>
</comment>
<comment type="catalytic activity">
    <reaction evidence="1">
        <text>a 1-acyl-sn-glycero-3-phosphocholine = a 1-acyl-sn-glycero-2,3-cyclic phosphate + choline</text>
        <dbReference type="Rhea" id="RHEA:60700"/>
        <dbReference type="ChEBI" id="CHEBI:15354"/>
        <dbReference type="ChEBI" id="CHEBI:58168"/>
        <dbReference type="ChEBI" id="CHEBI:143947"/>
    </reaction>
</comment>
<comment type="catalytic activity">
    <reaction evidence="1">
        <text>a 1-acyl-sn-glycero-3-phosphoethanolamine = a 1-acyl-sn-glycero-2,3-cyclic phosphate + ethanolamine</text>
        <dbReference type="Rhea" id="RHEA:60704"/>
        <dbReference type="ChEBI" id="CHEBI:57603"/>
        <dbReference type="ChEBI" id="CHEBI:64381"/>
        <dbReference type="ChEBI" id="CHEBI:143947"/>
    </reaction>
</comment>
<comment type="cofactor">
    <cofactor evidence="5">
        <name>Mg(2+)</name>
        <dbReference type="ChEBI" id="CHEBI:18420"/>
    </cofactor>
    <text evidence="5">Binds 1 Mg(2+) ion per subunit.</text>
</comment>
<comment type="subcellular location">
    <subcellularLocation>
        <location evidence="8">Secreted</location>
    </subcellularLocation>
</comment>
<comment type="tissue specificity">
    <text evidence="8">Expressed by the venom gland.</text>
</comment>
<comment type="similarity">
    <text evidence="7">Belongs to the arthropod phospholipase D family. Class II subfamily.</text>
</comment>
<comment type="caution">
    <text evidence="1 2 4">The most common activity assay for dermonecrotic toxins detects enzymatic activity by monitoring choline release from substrate. Liberation of choline from sphingomyelin (SM) or lysophosphatidylcholine (LPC) is commonly assumed to result from substrate hydrolysis, giving either ceramide-1-phosphate (C1P) or lysophosphatidic acid (LPA), respectively, as a second product. However, two studies from Lajoie and colleagues (2013 and 2015) report the observation of exclusive formation of cyclic phosphate products as second products, resulting from intramolecular transphosphatidylation. Cyclic phosphates have vastly different biological properties from their monoester counterparts, and they may be relevant to the pathology of brown spider envenomation.</text>
</comment>
<sequence>WIMGHMVNEIYQIDEFVDLGANSIETDITFDDNAMAEYSFHGVPCDCRRYCHKWEYINTFLDGLRRATTPGDSKFRKELALVVFDLKTGDLSSSTANKGGKLFGQKLLQHYWKGGNNGGRAYIILSIPDLDHYAFISGFKEALKTAGHEELLAKVGYDFSGNDDLGSTRTALNKAGVKDRERVWQSDGITNCVSTLFRGLDRVKKAVSNRDSSNGYINKVYHWTVDKYGSVRDALDAGVDGVMTNDPDVIVNVLNESKYKGKLRLATYDDNPWETFKP</sequence>
<proteinExistence type="evidence at transcript level"/>
<reference key="1">
    <citation type="journal article" date="2009" name="Mol. Biol. Evol.">
        <title>Molecular evolution, functional variation, and proposed nomenclature of the gene family that includes sphingomyelinase D in sicariid spider venoms.</title>
        <authorList>
            <person name="Binford G.J."/>
            <person name="Bodner M.R."/>
            <person name="Cordes M.H."/>
            <person name="Baldwin K.L."/>
            <person name="Rynerson M.R."/>
            <person name="Burns S.N."/>
            <person name="Zobel-Thropp P.A."/>
        </authorList>
    </citation>
    <scope>NUCLEOTIDE SEQUENCE [MRNA]</scope>
    <scope>NOMENCLATURE</scope>
    <source>
        <tissue>Venom gland</tissue>
    </source>
</reference>
<protein>
    <recommendedName>
        <fullName evidence="6">Dermonecrotic toxin LhSicTox-alphaIV1ii</fullName>
        <ecNumber evidence="4">4.6.1.-</ecNumber>
    </recommendedName>
    <alternativeName>
        <fullName>Phospholipase D</fullName>
        <shortName>PLD</shortName>
    </alternativeName>
    <alternativeName>
        <fullName>Sphingomyelin phosphodiesterase D</fullName>
        <shortName>SMD</shortName>
        <shortName>SMase D</shortName>
        <shortName>Sphingomyelinase D</shortName>
    </alternativeName>
</protein>
<evidence type="ECO:0000250" key="1">
    <source>
        <dbReference type="UniProtKB" id="A0A0D4WTV1"/>
    </source>
</evidence>
<evidence type="ECO:0000250" key="2">
    <source>
        <dbReference type="UniProtKB" id="A0A0D4WV12"/>
    </source>
</evidence>
<evidence type="ECO:0000250" key="3">
    <source>
        <dbReference type="UniProtKB" id="P0CE80"/>
    </source>
</evidence>
<evidence type="ECO:0000250" key="4">
    <source>
        <dbReference type="UniProtKB" id="Q4ZFU2"/>
    </source>
</evidence>
<evidence type="ECO:0000250" key="5">
    <source>
        <dbReference type="UniProtKB" id="Q8I914"/>
    </source>
</evidence>
<evidence type="ECO:0000303" key="6">
    <source>
    </source>
</evidence>
<evidence type="ECO:0000305" key="7"/>
<evidence type="ECO:0000305" key="8">
    <source>
    </source>
</evidence>
<dbReference type="EC" id="4.6.1.-" evidence="4"/>
<dbReference type="EMBL" id="FJ171450">
    <property type="protein sequence ID" value="ACN48946.1"/>
    <property type="molecule type" value="mRNA"/>
</dbReference>
<dbReference type="SMR" id="C0JB15"/>
<dbReference type="GO" id="GO:0005576">
    <property type="term" value="C:extracellular region"/>
    <property type="evidence" value="ECO:0007669"/>
    <property type="project" value="UniProtKB-SubCell"/>
</dbReference>
<dbReference type="GO" id="GO:0016829">
    <property type="term" value="F:lyase activity"/>
    <property type="evidence" value="ECO:0007669"/>
    <property type="project" value="UniProtKB-KW"/>
</dbReference>
<dbReference type="GO" id="GO:0046872">
    <property type="term" value="F:metal ion binding"/>
    <property type="evidence" value="ECO:0007669"/>
    <property type="project" value="UniProtKB-KW"/>
</dbReference>
<dbReference type="GO" id="GO:0008081">
    <property type="term" value="F:phosphoric diester hydrolase activity"/>
    <property type="evidence" value="ECO:0007669"/>
    <property type="project" value="InterPro"/>
</dbReference>
<dbReference type="GO" id="GO:0090729">
    <property type="term" value="F:toxin activity"/>
    <property type="evidence" value="ECO:0007669"/>
    <property type="project" value="UniProtKB-KW"/>
</dbReference>
<dbReference type="GO" id="GO:0031640">
    <property type="term" value="P:killing of cells of another organism"/>
    <property type="evidence" value="ECO:0007669"/>
    <property type="project" value="UniProtKB-KW"/>
</dbReference>
<dbReference type="GO" id="GO:0016042">
    <property type="term" value="P:lipid catabolic process"/>
    <property type="evidence" value="ECO:0007669"/>
    <property type="project" value="UniProtKB-KW"/>
</dbReference>
<dbReference type="CDD" id="cd08576">
    <property type="entry name" value="GDPD_like_SMaseD_PLD"/>
    <property type="match status" value="1"/>
</dbReference>
<dbReference type="Gene3D" id="3.20.20.190">
    <property type="entry name" value="Phosphatidylinositol (PI) phosphodiesterase"/>
    <property type="match status" value="1"/>
</dbReference>
<dbReference type="InterPro" id="IPR017946">
    <property type="entry name" value="PLC-like_Pdiesterase_TIM-brl"/>
</dbReference>
<dbReference type="Pfam" id="PF13653">
    <property type="entry name" value="GDPD_2"/>
    <property type="match status" value="1"/>
</dbReference>
<dbReference type="SUPFAM" id="SSF51695">
    <property type="entry name" value="PLC-like phosphodiesterases"/>
    <property type="match status" value="1"/>
</dbReference>
<accession>C0JB15</accession>
<name>A412_LOXHI</name>